<protein>
    <recommendedName>
        <fullName evidence="1">Histidinol-phosphate aminotransferase</fullName>
        <ecNumber evidence="1">2.6.1.9</ecNumber>
    </recommendedName>
    <alternativeName>
        <fullName evidence="1">Imidazole acetol-phosphate transaminase</fullName>
    </alternativeName>
</protein>
<accession>Q1AY33</accession>
<sequence length="351" mass="37972">MRFRAELEPLSPYNPPRASQEAAAERGTGGLVKLTSNELSFGPLPEAEAALAEALPRANRYPDRYAAALREAVAAANPGSDVANVLVGNGSSEVLQNLLMLVERPGEVLFPWPTFTLYPSIAGTLGLRARRVPLTEEHRVKPEALLSAVTGETRAVILCNPNNPTGTHLTLEEVSALADALPEDVLLILDEAYQEFVADPAYHGSHALALERPNVAVARTFSKAHGLAGFRVGYGLASREIADYAERVRFPFSVNLAAQVAATASMQAREKIRARAEFVIRERERVERAFREAGLNYVHSQGNFVLVETSPALFERAGVLVREGDPLGYPGWSRVTIGNTQENDLVIGALG</sequence>
<gene>
    <name evidence="1" type="primary">hisC</name>
    <name type="ordered locus">Rxyl_0726</name>
</gene>
<evidence type="ECO:0000255" key="1">
    <source>
        <dbReference type="HAMAP-Rule" id="MF_01023"/>
    </source>
</evidence>
<evidence type="ECO:0000256" key="2">
    <source>
        <dbReference type="SAM" id="MobiDB-lite"/>
    </source>
</evidence>
<dbReference type="EC" id="2.6.1.9" evidence="1"/>
<dbReference type="EMBL" id="CP000386">
    <property type="protein sequence ID" value="ABG03695.1"/>
    <property type="molecule type" value="Genomic_DNA"/>
</dbReference>
<dbReference type="RefSeq" id="WP_011563713.1">
    <property type="nucleotide sequence ID" value="NC_008148.1"/>
</dbReference>
<dbReference type="SMR" id="Q1AY33"/>
<dbReference type="STRING" id="266117.Rxyl_0726"/>
<dbReference type="KEGG" id="rxy:Rxyl_0726"/>
<dbReference type="eggNOG" id="COG0079">
    <property type="taxonomic scope" value="Bacteria"/>
</dbReference>
<dbReference type="HOGENOM" id="CLU_017584_3_3_11"/>
<dbReference type="PhylomeDB" id="Q1AY33"/>
<dbReference type="UniPathway" id="UPA00031">
    <property type="reaction ID" value="UER00012"/>
</dbReference>
<dbReference type="Proteomes" id="UP000006637">
    <property type="component" value="Chromosome"/>
</dbReference>
<dbReference type="GO" id="GO:0004400">
    <property type="term" value="F:histidinol-phosphate transaminase activity"/>
    <property type="evidence" value="ECO:0007669"/>
    <property type="project" value="UniProtKB-UniRule"/>
</dbReference>
<dbReference type="GO" id="GO:0030170">
    <property type="term" value="F:pyridoxal phosphate binding"/>
    <property type="evidence" value="ECO:0007669"/>
    <property type="project" value="InterPro"/>
</dbReference>
<dbReference type="GO" id="GO:0000105">
    <property type="term" value="P:L-histidine biosynthetic process"/>
    <property type="evidence" value="ECO:0007669"/>
    <property type="project" value="UniProtKB-UniRule"/>
</dbReference>
<dbReference type="CDD" id="cd00609">
    <property type="entry name" value="AAT_like"/>
    <property type="match status" value="1"/>
</dbReference>
<dbReference type="Gene3D" id="3.90.1150.10">
    <property type="entry name" value="Aspartate Aminotransferase, domain 1"/>
    <property type="match status" value="1"/>
</dbReference>
<dbReference type="Gene3D" id="3.40.640.10">
    <property type="entry name" value="Type I PLP-dependent aspartate aminotransferase-like (Major domain)"/>
    <property type="match status" value="1"/>
</dbReference>
<dbReference type="HAMAP" id="MF_01023">
    <property type="entry name" value="HisC_aminotrans_2"/>
    <property type="match status" value="1"/>
</dbReference>
<dbReference type="InterPro" id="IPR004839">
    <property type="entry name" value="Aminotransferase_I/II_large"/>
</dbReference>
<dbReference type="InterPro" id="IPR005861">
    <property type="entry name" value="HisP_aminotrans"/>
</dbReference>
<dbReference type="InterPro" id="IPR050106">
    <property type="entry name" value="HistidinolP_aminotransfase"/>
</dbReference>
<dbReference type="InterPro" id="IPR015424">
    <property type="entry name" value="PyrdxlP-dep_Trfase"/>
</dbReference>
<dbReference type="InterPro" id="IPR015421">
    <property type="entry name" value="PyrdxlP-dep_Trfase_major"/>
</dbReference>
<dbReference type="InterPro" id="IPR015422">
    <property type="entry name" value="PyrdxlP-dep_Trfase_small"/>
</dbReference>
<dbReference type="PANTHER" id="PTHR43643:SF6">
    <property type="entry name" value="HISTIDINOL-PHOSPHATE AMINOTRANSFERASE"/>
    <property type="match status" value="1"/>
</dbReference>
<dbReference type="PANTHER" id="PTHR43643">
    <property type="entry name" value="HISTIDINOL-PHOSPHATE AMINOTRANSFERASE 2"/>
    <property type="match status" value="1"/>
</dbReference>
<dbReference type="Pfam" id="PF00155">
    <property type="entry name" value="Aminotran_1_2"/>
    <property type="match status" value="1"/>
</dbReference>
<dbReference type="SUPFAM" id="SSF53383">
    <property type="entry name" value="PLP-dependent transferases"/>
    <property type="match status" value="1"/>
</dbReference>
<reference key="1">
    <citation type="submission" date="2006-06" db="EMBL/GenBank/DDBJ databases">
        <title>Complete sequence of Rubrobacter xylanophilus DSM 9941.</title>
        <authorList>
            <consortium name="US DOE Joint Genome Institute"/>
            <person name="Copeland A."/>
            <person name="Lucas S."/>
            <person name="Lapidus A."/>
            <person name="Barry K."/>
            <person name="Detter J.C."/>
            <person name="Glavina del Rio T."/>
            <person name="Hammon N."/>
            <person name="Israni S."/>
            <person name="Dalin E."/>
            <person name="Tice H."/>
            <person name="Pitluck S."/>
            <person name="Munk A.C."/>
            <person name="Brettin T."/>
            <person name="Bruce D."/>
            <person name="Han C."/>
            <person name="Tapia R."/>
            <person name="Gilna P."/>
            <person name="Schmutz J."/>
            <person name="Larimer F."/>
            <person name="Land M."/>
            <person name="Hauser L."/>
            <person name="Kyrpides N."/>
            <person name="Lykidis A."/>
            <person name="da Costa M.S."/>
            <person name="Rainey F.A."/>
            <person name="Empadinhas N."/>
            <person name="Jolivet E."/>
            <person name="Battista J.R."/>
            <person name="Richardson P."/>
        </authorList>
    </citation>
    <scope>NUCLEOTIDE SEQUENCE [LARGE SCALE GENOMIC DNA]</scope>
    <source>
        <strain>DSM 9941 / JCM 11954 / NBRC 16129 / PRD-1</strain>
    </source>
</reference>
<feature type="chain" id="PRO_0000319785" description="Histidinol-phosphate aminotransferase">
    <location>
        <begin position="1"/>
        <end position="351"/>
    </location>
</feature>
<feature type="region of interest" description="Disordered" evidence="2">
    <location>
        <begin position="1"/>
        <end position="26"/>
    </location>
</feature>
<feature type="modified residue" description="N6-(pyridoxal phosphate)lysine" evidence="1">
    <location>
        <position position="223"/>
    </location>
</feature>
<comment type="catalytic activity">
    <reaction evidence="1">
        <text>L-histidinol phosphate + 2-oxoglutarate = 3-(imidazol-4-yl)-2-oxopropyl phosphate + L-glutamate</text>
        <dbReference type="Rhea" id="RHEA:23744"/>
        <dbReference type="ChEBI" id="CHEBI:16810"/>
        <dbReference type="ChEBI" id="CHEBI:29985"/>
        <dbReference type="ChEBI" id="CHEBI:57766"/>
        <dbReference type="ChEBI" id="CHEBI:57980"/>
        <dbReference type="EC" id="2.6.1.9"/>
    </reaction>
</comment>
<comment type="cofactor">
    <cofactor evidence="1">
        <name>pyridoxal 5'-phosphate</name>
        <dbReference type="ChEBI" id="CHEBI:597326"/>
    </cofactor>
</comment>
<comment type="pathway">
    <text evidence="1">Amino-acid biosynthesis; L-histidine biosynthesis; L-histidine from 5-phospho-alpha-D-ribose 1-diphosphate: step 7/9.</text>
</comment>
<comment type="subunit">
    <text evidence="1">Homodimer.</text>
</comment>
<comment type="similarity">
    <text evidence="1">Belongs to the class-II pyridoxal-phosphate-dependent aminotransferase family. Histidinol-phosphate aminotransferase subfamily.</text>
</comment>
<name>HIS8_RUBXD</name>
<keyword id="KW-0028">Amino-acid biosynthesis</keyword>
<keyword id="KW-0032">Aminotransferase</keyword>
<keyword id="KW-0368">Histidine biosynthesis</keyword>
<keyword id="KW-0663">Pyridoxal phosphate</keyword>
<keyword id="KW-1185">Reference proteome</keyword>
<keyword id="KW-0808">Transferase</keyword>
<organism>
    <name type="scientific">Rubrobacter xylanophilus (strain DSM 9941 / JCM 11954 / NBRC 16129 / PRD-1)</name>
    <dbReference type="NCBI Taxonomy" id="266117"/>
    <lineage>
        <taxon>Bacteria</taxon>
        <taxon>Bacillati</taxon>
        <taxon>Actinomycetota</taxon>
        <taxon>Rubrobacteria</taxon>
        <taxon>Rubrobacterales</taxon>
        <taxon>Rubrobacteraceae</taxon>
        <taxon>Rubrobacter</taxon>
    </lineage>
</organism>
<proteinExistence type="inferred from homology"/>